<reference key="1">
    <citation type="journal article" date="1996" name="Science">
        <title>Complete genome sequence of the methanogenic archaeon, Methanococcus jannaschii.</title>
        <authorList>
            <person name="Bult C.J."/>
            <person name="White O."/>
            <person name="Olsen G.J."/>
            <person name="Zhou L."/>
            <person name="Fleischmann R.D."/>
            <person name="Sutton G.G."/>
            <person name="Blake J.A."/>
            <person name="FitzGerald L.M."/>
            <person name="Clayton R.A."/>
            <person name="Gocayne J.D."/>
            <person name="Kerlavage A.R."/>
            <person name="Dougherty B.A."/>
            <person name="Tomb J.-F."/>
            <person name="Adams M.D."/>
            <person name="Reich C.I."/>
            <person name="Overbeek R."/>
            <person name="Kirkness E.F."/>
            <person name="Weinstock K.G."/>
            <person name="Merrick J.M."/>
            <person name="Glodek A."/>
            <person name="Scott J.L."/>
            <person name="Geoghagen N.S.M."/>
            <person name="Weidman J.F."/>
            <person name="Fuhrmann J.L."/>
            <person name="Nguyen D."/>
            <person name="Utterback T.R."/>
            <person name="Kelley J.M."/>
            <person name="Peterson J.D."/>
            <person name="Sadow P.W."/>
            <person name="Hanna M.C."/>
            <person name="Cotton M.D."/>
            <person name="Roberts K.M."/>
            <person name="Hurst M.A."/>
            <person name="Kaine B.P."/>
            <person name="Borodovsky M."/>
            <person name="Klenk H.-P."/>
            <person name="Fraser C.M."/>
            <person name="Smith H.O."/>
            <person name="Woese C.R."/>
            <person name="Venter J.C."/>
        </authorList>
    </citation>
    <scope>NUCLEOTIDE SEQUENCE [LARGE SCALE GENOMIC DNA]</scope>
    <source>
        <strain>ATCC 43067 / DSM 2661 / JAL-1 / JCM 10045 / NBRC 100440</strain>
    </source>
</reference>
<reference key="2">
    <citation type="journal article" date="2008" name="Biochemistry">
        <title>Identification and characterization of the 2-phospho-L-lactate guanylyltransferase involved in coenzyme F420 biosynthesis.</title>
        <authorList>
            <person name="Grochowski L.L."/>
            <person name="Xu H."/>
            <person name="White R.H."/>
        </authorList>
    </citation>
    <scope>FUNCTION</scope>
    <scope>CATALYTIC ACTIVITY</scope>
    <scope>SUBSTRATE SPECIFICITY</scope>
    <scope>ROLE IN F420 BIOSYNTHESIS</scope>
    <scope>BIOPHYSICOCHEMICAL PROPERTIES</scope>
    <scope>SUBUNIT</scope>
    <source>
        <strain>ATCC 43067 / DSM 2661 / JAL-1 / JCM 10045 / NBRC 100440</strain>
    </source>
</reference>
<reference key="3">
    <citation type="journal article" date="2019" name="ACS Chem. Biol.">
        <title>Metabolic pathway rerouting in Paraburkholderia rhizoxinica evolved long-overlooked derivatives of coenzyme F420.</title>
        <authorList>
            <person name="Braga D."/>
            <person name="Last D."/>
            <person name="Hasan M."/>
            <person name="Guo H."/>
            <person name="Leichnitz D."/>
            <person name="Uzum Z."/>
            <person name="Richter I."/>
            <person name="Schalk F."/>
            <person name="Beemelmanns C."/>
            <person name="Hertweck C."/>
            <person name="Lackner G."/>
        </authorList>
    </citation>
    <scope>FUNCTION</scope>
    <scope>CATALYTIC ACTIVITY</scope>
    <scope>SUBSTRATE SPECIFICITY</scope>
</reference>
<name>COFC_METJA</name>
<protein>
    <recommendedName>
        <fullName evidence="3">2-phospho-L-lactate guanylyltransferase</fullName>
        <shortName>LP guanylyltransferase</shortName>
        <ecNumber evidence="1 2">2.7.7.68</ecNumber>
    </recommendedName>
</protein>
<organism>
    <name type="scientific">Methanocaldococcus jannaschii (strain ATCC 43067 / DSM 2661 / JAL-1 / JCM 10045 / NBRC 100440)</name>
    <name type="common">Methanococcus jannaschii</name>
    <dbReference type="NCBI Taxonomy" id="243232"/>
    <lineage>
        <taxon>Archaea</taxon>
        <taxon>Methanobacteriati</taxon>
        <taxon>Methanobacteriota</taxon>
        <taxon>Methanomada group</taxon>
        <taxon>Methanococci</taxon>
        <taxon>Methanococcales</taxon>
        <taxon>Methanocaldococcaceae</taxon>
        <taxon>Methanocaldococcus</taxon>
    </lineage>
</organism>
<dbReference type="EC" id="2.7.7.68" evidence="1 2"/>
<dbReference type="EMBL" id="L77117">
    <property type="protein sequence ID" value="AAB98891.1"/>
    <property type="molecule type" value="Genomic_DNA"/>
</dbReference>
<dbReference type="PIR" id="G64410">
    <property type="entry name" value="G64410"/>
</dbReference>
<dbReference type="SMR" id="Q58297"/>
<dbReference type="FunCoup" id="Q58297">
    <property type="interactions" value="110"/>
</dbReference>
<dbReference type="STRING" id="243232.MJ_0887"/>
<dbReference type="PaxDb" id="243232-MJ_0887"/>
<dbReference type="EnsemblBacteria" id="AAB98891">
    <property type="protein sequence ID" value="AAB98891"/>
    <property type="gene ID" value="MJ_0887"/>
</dbReference>
<dbReference type="KEGG" id="mja:MJ_0887"/>
<dbReference type="eggNOG" id="arCOG04472">
    <property type="taxonomic scope" value="Archaea"/>
</dbReference>
<dbReference type="HOGENOM" id="CLU_076569_2_0_2"/>
<dbReference type="InParanoid" id="Q58297"/>
<dbReference type="PhylomeDB" id="Q58297"/>
<dbReference type="BioCyc" id="MetaCyc:MONOMER-14615"/>
<dbReference type="BRENDA" id="2.7.7.105">
    <property type="organism ID" value="3260"/>
</dbReference>
<dbReference type="BRENDA" id="2.7.7.68">
    <property type="organism ID" value="3260"/>
</dbReference>
<dbReference type="SABIO-RK" id="Q58297"/>
<dbReference type="UniPathway" id="UPA00071"/>
<dbReference type="Proteomes" id="UP000000805">
    <property type="component" value="Chromosome"/>
</dbReference>
<dbReference type="GO" id="GO:0005525">
    <property type="term" value="F:GTP binding"/>
    <property type="evidence" value="ECO:0007669"/>
    <property type="project" value="UniProtKB-KW"/>
</dbReference>
<dbReference type="GO" id="GO:0043814">
    <property type="term" value="F:phospholactate guanylyltransferase activity"/>
    <property type="evidence" value="ECO:0000314"/>
    <property type="project" value="UniProtKB"/>
</dbReference>
<dbReference type="GO" id="GO:0052645">
    <property type="term" value="P:F420-0 metabolic process"/>
    <property type="evidence" value="ECO:0000314"/>
    <property type="project" value="UniProtKB"/>
</dbReference>
<dbReference type="FunFam" id="3.90.550.10:FF:000488">
    <property type="entry name" value="2-phospho-L-lactate guanylyltransferase"/>
    <property type="match status" value="1"/>
</dbReference>
<dbReference type="Gene3D" id="3.90.550.10">
    <property type="entry name" value="Spore Coat Polysaccharide Biosynthesis Protein SpsA, Chain A"/>
    <property type="match status" value="1"/>
</dbReference>
<dbReference type="HAMAP" id="MF_02114">
    <property type="entry name" value="CofC"/>
    <property type="match status" value="1"/>
</dbReference>
<dbReference type="InterPro" id="IPR002835">
    <property type="entry name" value="CofC"/>
</dbReference>
<dbReference type="InterPro" id="IPR029044">
    <property type="entry name" value="Nucleotide-diphossugar_trans"/>
</dbReference>
<dbReference type="NCBIfam" id="TIGR03552">
    <property type="entry name" value="F420_cofC"/>
    <property type="match status" value="1"/>
</dbReference>
<dbReference type="PANTHER" id="PTHR40392">
    <property type="entry name" value="2-PHOSPHO-L-LACTATE GUANYLYLTRANSFERASE"/>
    <property type="match status" value="1"/>
</dbReference>
<dbReference type="PANTHER" id="PTHR40392:SF1">
    <property type="entry name" value="2-PHOSPHO-L-LACTATE GUANYLYLTRANSFERASE"/>
    <property type="match status" value="1"/>
</dbReference>
<dbReference type="Pfam" id="PF01983">
    <property type="entry name" value="CofC"/>
    <property type="match status" value="1"/>
</dbReference>
<dbReference type="SUPFAM" id="SSF53448">
    <property type="entry name" value="Nucleotide-diphospho-sugar transferases"/>
    <property type="match status" value="1"/>
</dbReference>
<feature type="chain" id="PRO_0000107091" description="2-phospho-L-lactate guanylyltransferase">
    <location>
        <begin position="1"/>
        <end position="224"/>
    </location>
</feature>
<gene>
    <name type="primary">cofC</name>
    <name type="ordered locus">MJ0887</name>
</gene>
<keyword id="KW-0342">GTP-binding</keyword>
<keyword id="KW-0547">Nucleotide-binding</keyword>
<keyword id="KW-0548">Nucleotidyltransferase</keyword>
<keyword id="KW-1185">Reference proteome</keyword>
<keyword id="KW-0808">Transferase</keyword>
<proteinExistence type="evidence at protein level"/>
<sequence length="224" mass="25683">MNCGIKMKVIIPVSPINSLKTRLSEFLSGEERKNLLLNMLKDIIKALDGLDIVIVSRDEEILDFAKNELKAETIKEKYKGLNNAIKQAFEEIEDKEVIIIPADIPLIKKKHIEDILKLSKNYDLIIAPSRGGGTNLLYLKSKDLIEIKYEGFSFLKHLEEAKKRNLRYYIYDSFLISVDINTPEDLGEIFIHGNDTYTKNYLKSLGIDVEPKHSSAGRFVVKRR</sequence>
<evidence type="ECO:0000269" key="1">
    <source>
    </source>
</evidence>
<evidence type="ECO:0000269" key="2">
    <source>
    </source>
</evidence>
<evidence type="ECO:0000303" key="3">
    <source>
    </source>
</evidence>
<evidence type="ECO:0000305" key="4"/>
<comment type="function">
    <text evidence="1 2">Guanylyltransferase that catalyzes the activation of (2S)-2-phospholactate (2-PL) as (2S)-lactyl-2-diphospho-5'-guanosine, via the condensation of 2-PL with GTP. It is involved in the biosynthesis of coenzyme F420, a hydride carrier cofactor (PubMed:18260642, PubMed:31469543). Is able to utilize other purine nucleotides including ATP, dGTP and ITP as cosubstrates in place of GTP but with a lower activity. Does not display lactate kinase activity (PubMed:18260642).</text>
</comment>
<comment type="catalytic activity">
    <reaction evidence="1 2">
        <text>(2S)-2-phospholactate + GTP + H(+) = (2S)-lactyl-2-diphospho-5'-guanosine + diphosphate</text>
        <dbReference type="Rhea" id="RHEA:63424"/>
        <dbReference type="ChEBI" id="CHEBI:15378"/>
        <dbReference type="ChEBI" id="CHEBI:33019"/>
        <dbReference type="ChEBI" id="CHEBI:37565"/>
        <dbReference type="ChEBI" id="CHEBI:59435"/>
        <dbReference type="ChEBI" id="CHEBI:59906"/>
        <dbReference type="EC" id="2.7.7.68"/>
    </reaction>
</comment>
<comment type="biophysicochemical properties">
    <kinetics>
        <KM evidence="1">36 uM for (2S)-2-phospholactate</KM>
        <KM evidence="1">56 uM for GTP</KM>
        <Vmax evidence="1">3.0 umol/min/mg enzyme</Vmax>
    </kinetics>
    <temperatureDependence>
        <text evidence="1">Retains all activity when heated up to 90 degrees Celsius for 10 minutes and retained 38% activity after 10 minutes at 100 degrees Celsius.</text>
    </temperatureDependence>
</comment>
<comment type="pathway">
    <text>Cofactor biosynthesis; coenzyme F420 biosynthesis.</text>
</comment>
<comment type="subunit">
    <text evidence="1">Homodimer.</text>
</comment>
<comment type="similarity">
    <text evidence="4">Belongs to the CofC family.</text>
</comment>
<accession>Q58297</accession>